<name>RLMC_MANSM</name>
<dbReference type="EC" id="2.1.1.189" evidence="1"/>
<dbReference type="EMBL" id="AE016827">
    <property type="protein sequence ID" value="AAU37002.1"/>
    <property type="molecule type" value="Genomic_DNA"/>
</dbReference>
<dbReference type="RefSeq" id="WP_011199577.1">
    <property type="nucleotide sequence ID" value="NC_006300.1"/>
</dbReference>
<dbReference type="SMR" id="Q65VK8"/>
<dbReference type="STRING" id="221988.MS0395"/>
<dbReference type="KEGG" id="msu:MS0395"/>
<dbReference type="eggNOG" id="COG2265">
    <property type="taxonomic scope" value="Bacteria"/>
</dbReference>
<dbReference type="HOGENOM" id="CLU_014689_0_0_6"/>
<dbReference type="OrthoDB" id="9804590at2"/>
<dbReference type="Proteomes" id="UP000000607">
    <property type="component" value="Chromosome"/>
</dbReference>
<dbReference type="GO" id="GO:0051539">
    <property type="term" value="F:4 iron, 4 sulfur cluster binding"/>
    <property type="evidence" value="ECO:0007669"/>
    <property type="project" value="UniProtKB-KW"/>
</dbReference>
<dbReference type="GO" id="GO:0005506">
    <property type="term" value="F:iron ion binding"/>
    <property type="evidence" value="ECO:0007669"/>
    <property type="project" value="UniProtKB-UniRule"/>
</dbReference>
<dbReference type="GO" id="GO:0070041">
    <property type="term" value="F:rRNA (uridine-C5-)-methyltransferase activity"/>
    <property type="evidence" value="ECO:0007669"/>
    <property type="project" value="UniProtKB-UniRule"/>
</dbReference>
<dbReference type="GO" id="GO:0070475">
    <property type="term" value="P:rRNA base methylation"/>
    <property type="evidence" value="ECO:0007669"/>
    <property type="project" value="TreeGrafter"/>
</dbReference>
<dbReference type="CDD" id="cd02440">
    <property type="entry name" value="AdoMet_MTases"/>
    <property type="match status" value="1"/>
</dbReference>
<dbReference type="Gene3D" id="2.40.50.1070">
    <property type="match status" value="1"/>
</dbReference>
<dbReference type="Gene3D" id="3.40.50.150">
    <property type="entry name" value="Vaccinia Virus protein VP39"/>
    <property type="match status" value="1"/>
</dbReference>
<dbReference type="HAMAP" id="MF_01012">
    <property type="entry name" value="23SrRNA_methyltr_RlmC"/>
    <property type="match status" value="1"/>
</dbReference>
<dbReference type="InterPro" id="IPR011825">
    <property type="entry name" value="23SrRNA_MeTrfase_RlmC"/>
</dbReference>
<dbReference type="InterPro" id="IPR030390">
    <property type="entry name" value="MeTrfase_TrmA_AS"/>
</dbReference>
<dbReference type="InterPro" id="IPR030391">
    <property type="entry name" value="MeTrfase_TrmA_CS"/>
</dbReference>
<dbReference type="InterPro" id="IPR029063">
    <property type="entry name" value="SAM-dependent_MTases_sf"/>
</dbReference>
<dbReference type="InterPro" id="IPR010280">
    <property type="entry name" value="U5_MeTrfase_fam"/>
</dbReference>
<dbReference type="NCBIfam" id="TIGR02085">
    <property type="entry name" value="meth_trns_rumB"/>
    <property type="match status" value="1"/>
</dbReference>
<dbReference type="PANTHER" id="PTHR11061">
    <property type="entry name" value="RNA M5U METHYLTRANSFERASE"/>
    <property type="match status" value="1"/>
</dbReference>
<dbReference type="PANTHER" id="PTHR11061:SF30">
    <property type="entry name" value="TRNA (URACIL(54)-C(5))-METHYLTRANSFERASE"/>
    <property type="match status" value="1"/>
</dbReference>
<dbReference type="Pfam" id="PF05958">
    <property type="entry name" value="tRNA_U5-meth_tr"/>
    <property type="match status" value="1"/>
</dbReference>
<dbReference type="SUPFAM" id="SSF53335">
    <property type="entry name" value="S-adenosyl-L-methionine-dependent methyltransferases"/>
    <property type="match status" value="1"/>
</dbReference>
<dbReference type="PROSITE" id="PS51687">
    <property type="entry name" value="SAM_MT_RNA_M5U"/>
    <property type="match status" value="1"/>
</dbReference>
<dbReference type="PROSITE" id="PS01230">
    <property type="entry name" value="TRMA_1"/>
    <property type="match status" value="1"/>
</dbReference>
<dbReference type="PROSITE" id="PS01231">
    <property type="entry name" value="TRMA_2"/>
    <property type="match status" value="1"/>
</dbReference>
<feature type="chain" id="PRO_0000161931" description="23S rRNA (uracil(747)-C(5))-methyltransferase RlmC">
    <location>
        <begin position="1"/>
        <end position="389"/>
    </location>
</feature>
<feature type="active site" description="Nucleophile" evidence="1">
    <location>
        <position position="348"/>
    </location>
</feature>
<feature type="binding site" evidence="1">
    <location>
        <position position="5"/>
    </location>
    <ligand>
        <name>[4Fe-4S] cluster</name>
        <dbReference type="ChEBI" id="CHEBI:49883"/>
    </ligand>
</feature>
<feature type="binding site" evidence="1">
    <location>
        <position position="13"/>
    </location>
    <ligand>
        <name>[4Fe-4S] cluster</name>
        <dbReference type="ChEBI" id="CHEBI:49883"/>
    </ligand>
</feature>
<feature type="binding site" evidence="1">
    <location>
        <position position="16"/>
    </location>
    <ligand>
        <name>[4Fe-4S] cluster</name>
        <dbReference type="ChEBI" id="CHEBI:49883"/>
    </ligand>
</feature>
<feature type="binding site" evidence="1">
    <location>
        <position position="94"/>
    </location>
    <ligand>
        <name>[4Fe-4S] cluster</name>
        <dbReference type="ChEBI" id="CHEBI:49883"/>
    </ligand>
</feature>
<feature type="binding site" evidence="1">
    <location>
        <position position="219"/>
    </location>
    <ligand>
        <name>S-adenosyl-L-methionine</name>
        <dbReference type="ChEBI" id="CHEBI:59789"/>
    </ligand>
</feature>
<feature type="binding site" evidence="1">
    <location>
        <position position="248"/>
    </location>
    <ligand>
        <name>S-adenosyl-L-methionine</name>
        <dbReference type="ChEBI" id="CHEBI:59789"/>
    </ligand>
</feature>
<feature type="binding site" evidence="1">
    <location>
        <position position="275"/>
    </location>
    <ligand>
        <name>S-adenosyl-L-methionine</name>
        <dbReference type="ChEBI" id="CHEBI:59789"/>
    </ligand>
</feature>
<feature type="binding site" evidence="1">
    <location>
        <position position="321"/>
    </location>
    <ligand>
        <name>S-adenosyl-L-methionine</name>
        <dbReference type="ChEBI" id="CHEBI:59789"/>
    </ligand>
</feature>
<accession>Q65VK8</accession>
<gene>
    <name evidence="1" type="primary">rlmC</name>
    <name type="synonym">rumB</name>
    <name type="ordered locus">MS0395</name>
</gene>
<keyword id="KW-0004">4Fe-4S</keyword>
<keyword id="KW-0408">Iron</keyword>
<keyword id="KW-0411">Iron-sulfur</keyword>
<keyword id="KW-0479">Metal-binding</keyword>
<keyword id="KW-0489">Methyltransferase</keyword>
<keyword id="KW-0698">rRNA processing</keyword>
<keyword id="KW-0949">S-adenosyl-L-methionine</keyword>
<keyword id="KW-0808">Transferase</keyword>
<comment type="function">
    <text evidence="1">Catalyzes the formation of 5-methyl-uridine at position 747 (m5U747) in 23S rRNA.</text>
</comment>
<comment type="catalytic activity">
    <reaction evidence="1">
        <text>uridine(747) in 23S rRNA + S-adenosyl-L-methionine = 5-methyluridine(747) in 23S rRNA + S-adenosyl-L-homocysteine + H(+)</text>
        <dbReference type="Rhea" id="RHEA:42628"/>
        <dbReference type="Rhea" id="RHEA-COMP:10154"/>
        <dbReference type="Rhea" id="RHEA-COMP:10155"/>
        <dbReference type="ChEBI" id="CHEBI:15378"/>
        <dbReference type="ChEBI" id="CHEBI:57856"/>
        <dbReference type="ChEBI" id="CHEBI:59789"/>
        <dbReference type="ChEBI" id="CHEBI:65315"/>
        <dbReference type="ChEBI" id="CHEBI:74447"/>
        <dbReference type="EC" id="2.1.1.189"/>
    </reaction>
</comment>
<comment type="similarity">
    <text evidence="1">Belongs to the class I-like SAM-binding methyltransferase superfamily. RNA M5U methyltransferase family. RlmC subfamily.</text>
</comment>
<proteinExistence type="inferred from homology"/>
<sequence>MTTKCPHFQTQQCQSCQWINRPYDEQLNEKQIHLKQQIAPLDQSQLRWSAPFQSRQSGFRNKAKMVVSGAVERPVLGILKDQNAPQSAVDLTDCLLYSAGFKPIFPVLKDFIGRAGLVPYNVAKQKGELKYILLTESGYQGDIMLRFVLRSENKIPLIRRELAKLREKLPQLKVISANIQPQHAAILEGEKEIFFTERQVLEERFNRIPLFIRPQGFFQTNPQVAEGLYGTAQQWVKDLPVNKLWDLFCGVGGFGLHCAKALQEKNPDIELTGIEIAPSAIYCAGLSAQKCGLKKVNFQSLDAANFALNQDENKPDLVIVNPPRRGIGKPLAQFLNQMQPQFILYSSCNAISMTKDLLELTHYQLQKIQLFDMFPHTSHYEVLTLLIKR</sequence>
<reference key="1">
    <citation type="journal article" date="2004" name="Nat. Biotechnol.">
        <title>The genome sequence of the capnophilic rumen bacterium Mannheimia succiniciproducens.</title>
        <authorList>
            <person name="Hong S.H."/>
            <person name="Kim J.S."/>
            <person name="Lee S.Y."/>
            <person name="In Y.H."/>
            <person name="Choi S.S."/>
            <person name="Rih J.-K."/>
            <person name="Kim C.H."/>
            <person name="Jeong H."/>
            <person name="Hur C.G."/>
            <person name="Kim J.J."/>
        </authorList>
    </citation>
    <scope>NUCLEOTIDE SEQUENCE [LARGE SCALE GENOMIC DNA]</scope>
    <source>
        <strain>KCTC 0769BP / MBEL55E</strain>
    </source>
</reference>
<organism>
    <name type="scientific">Mannheimia succiniciproducens (strain KCTC 0769BP / MBEL55E)</name>
    <dbReference type="NCBI Taxonomy" id="221988"/>
    <lineage>
        <taxon>Bacteria</taxon>
        <taxon>Pseudomonadati</taxon>
        <taxon>Pseudomonadota</taxon>
        <taxon>Gammaproteobacteria</taxon>
        <taxon>Pasteurellales</taxon>
        <taxon>Pasteurellaceae</taxon>
        <taxon>Basfia</taxon>
    </lineage>
</organism>
<evidence type="ECO:0000255" key="1">
    <source>
        <dbReference type="HAMAP-Rule" id="MF_01012"/>
    </source>
</evidence>
<protein>
    <recommendedName>
        <fullName evidence="1">23S rRNA (uracil(747)-C(5))-methyltransferase RlmC</fullName>
        <ecNumber evidence="1">2.1.1.189</ecNumber>
    </recommendedName>
    <alternativeName>
        <fullName evidence="1">23S rRNA(m5U747)-methyltransferase</fullName>
    </alternativeName>
</protein>